<dbReference type="EC" id="3.6.1.27" evidence="1"/>
<dbReference type="EMBL" id="CP001657">
    <property type="protein sequence ID" value="ACT14425.1"/>
    <property type="molecule type" value="Genomic_DNA"/>
</dbReference>
<dbReference type="SMR" id="C6DDL8"/>
<dbReference type="STRING" id="561230.PC1_3409"/>
<dbReference type="KEGG" id="pct:PC1_3409"/>
<dbReference type="eggNOG" id="COG1968">
    <property type="taxonomic scope" value="Bacteria"/>
</dbReference>
<dbReference type="HOGENOM" id="CLU_060296_2_0_6"/>
<dbReference type="OrthoDB" id="9808289at2"/>
<dbReference type="Proteomes" id="UP000002736">
    <property type="component" value="Chromosome"/>
</dbReference>
<dbReference type="GO" id="GO:0005886">
    <property type="term" value="C:plasma membrane"/>
    <property type="evidence" value="ECO:0007669"/>
    <property type="project" value="UniProtKB-SubCell"/>
</dbReference>
<dbReference type="GO" id="GO:0050380">
    <property type="term" value="F:undecaprenyl-diphosphatase activity"/>
    <property type="evidence" value="ECO:0007669"/>
    <property type="project" value="UniProtKB-UniRule"/>
</dbReference>
<dbReference type="GO" id="GO:0071555">
    <property type="term" value="P:cell wall organization"/>
    <property type="evidence" value="ECO:0007669"/>
    <property type="project" value="UniProtKB-KW"/>
</dbReference>
<dbReference type="GO" id="GO:0009252">
    <property type="term" value="P:peptidoglycan biosynthetic process"/>
    <property type="evidence" value="ECO:0007669"/>
    <property type="project" value="UniProtKB-KW"/>
</dbReference>
<dbReference type="GO" id="GO:0008360">
    <property type="term" value="P:regulation of cell shape"/>
    <property type="evidence" value="ECO:0007669"/>
    <property type="project" value="UniProtKB-KW"/>
</dbReference>
<dbReference type="GO" id="GO:0046677">
    <property type="term" value="P:response to antibiotic"/>
    <property type="evidence" value="ECO:0007669"/>
    <property type="project" value="UniProtKB-UniRule"/>
</dbReference>
<dbReference type="HAMAP" id="MF_01006">
    <property type="entry name" value="Undec_diphosphatase"/>
    <property type="match status" value="1"/>
</dbReference>
<dbReference type="InterPro" id="IPR003824">
    <property type="entry name" value="UppP"/>
</dbReference>
<dbReference type="NCBIfam" id="NF001388">
    <property type="entry name" value="PRK00281.1-1"/>
    <property type="match status" value="1"/>
</dbReference>
<dbReference type="NCBIfam" id="NF001389">
    <property type="entry name" value="PRK00281.1-2"/>
    <property type="match status" value="1"/>
</dbReference>
<dbReference type="NCBIfam" id="NF001390">
    <property type="entry name" value="PRK00281.1-4"/>
    <property type="match status" value="1"/>
</dbReference>
<dbReference type="NCBIfam" id="TIGR00753">
    <property type="entry name" value="undec_PP_bacA"/>
    <property type="match status" value="1"/>
</dbReference>
<dbReference type="PANTHER" id="PTHR30622">
    <property type="entry name" value="UNDECAPRENYL-DIPHOSPHATASE"/>
    <property type="match status" value="1"/>
</dbReference>
<dbReference type="PANTHER" id="PTHR30622:SF3">
    <property type="entry name" value="UNDECAPRENYL-DIPHOSPHATASE"/>
    <property type="match status" value="1"/>
</dbReference>
<dbReference type="Pfam" id="PF02673">
    <property type="entry name" value="BacA"/>
    <property type="match status" value="1"/>
</dbReference>
<comment type="function">
    <text evidence="1">Catalyzes the dephosphorylation of undecaprenyl diphosphate (UPP). Confers resistance to bacitracin.</text>
</comment>
<comment type="catalytic activity">
    <reaction evidence="1">
        <text>di-trans,octa-cis-undecaprenyl diphosphate + H2O = di-trans,octa-cis-undecaprenyl phosphate + phosphate + H(+)</text>
        <dbReference type="Rhea" id="RHEA:28094"/>
        <dbReference type="ChEBI" id="CHEBI:15377"/>
        <dbReference type="ChEBI" id="CHEBI:15378"/>
        <dbReference type="ChEBI" id="CHEBI:43474"/>
        <dbReference type="ChEBI" id="CHEBI:58405"/>
        <dbReference type="ChEBI" id="CHEBI:60392"/>
        <dbReference type="EC" id="3.6.1.27"/>
    </reaction>
</comment>
<comment type="subcellular location">
    <subcellularLocation>
        <location evidence="1">Cell inner membrane</location>
        <topology evidence="1">Multi-pass membrane protein</topology>
    </subcellularLocation>
</comment>
<comment type="miscellaneous">
    <text>Bacitracin is thought to be involved in the inhibition of peptidoglycan synthesis by sequestering undecaprenyl diphosphate, thereby reducing the pool of lipid carrier available.</text>
</comment>
<comment type="similarity">
    <text evidence="1">Belongs to the UppP family.</text>
</comment>
<sequence>MTDLHSLLIAFILGVVEGLTEFLPVSSTGHMIIVGHWLGFVDEKAKTFEVIIQLGSILAVVVMFWRRLFGLIGIHFGEVPHEGHTAGRLKLTHILLAMIPAVVLGLVFHDVIKSLFYPQNVMYALVVGGFLLLAAEWLKPKKPRAVGLDDITHRQAFMIGCFQCLALWPGFSRSGATISGGMLVGVSRYAASEFSFILAVPMMMGATVLDLYKSWHFLSLSDVPMFAVGFVTAFLVALIAIKTFLKIIKRISFVPFAIYRFIVAGVVYMVFM</sequence>
<name>UPPP_PECCP</name>
<gene>
    <name evidence="1" type="primary">uppP</name>
    <name type="ordered locus">PC1_3409</name>
</gene>
<reference key="1">
    <citation type="submission" date="2009-07" db="EMBL/GenBank/DDBJ databases">
        <title>Complete sequence of Pectobacterium carotovorum subsp. carotovorum PC1.</title>
        <authorList>
            <consortium name="US DOE Joint Genome Institute"/>
            <person name="Lucas S."/>
            <person name="Copeland A."/>
            <person name="Lapidus A."/>
            <person name="Glavina del Rio T."/>
            <person name="Tice H."/>
            <person name="Bruce D."/>
            <person name="Goodwin L."/>
            <person name="Pitluck S."/>
            <person name="Munk A.C."/>
            <person name="Brettin T."/>
            <person name="Detter J.C."/>
            <person name="Han C."/>
            <person name="Tapia R."/>
            <person name="Larimer F."/>
            <person name="Land M."/>
            <person name="Hauser L."/>
            <person name="Kyrpides N."/>
            <person name="Mikhailova N."/>
            <person name="Balakrishnan V."/>
            <person name="Glasner J."/>
            <person name="Perna N.T."/>
        </authorList>
    </citation>
    <scope>NUCLEOTIDE SEQUENCE [LARGE SCALE GENOMIC DNA]</scope>
    <source>
        <strain>PC1</strain>
    </source>
</reference>
<evidence type="ECO:0000255" key="1">
    <source>
        <dbReference type="HAMAP-Rule" id="MF_01006"/>
    </source>
</evidence>
<keyword id="KW-0046">Antibiotic resistance</keyword>
<keyword id="KW-0997">Cell inner membrane</keyword>
<keyword id="KW-1003">Cell membrane</keyword>
<keyword id="KW-0133">Cell shape</keyword>
<keyword id="KW-0961">Cell wall biogenesis/degradation</keyword>
<keyword id="KW-0378">Hydrolase</keyword>
<keyword id="KW-0472">Membrane</keyword>
<keyword id="KW-0573">Peptidoglycan synthesis</keyword>
<keyword id="KW-0812">Transmembrane</keyword>
<keyword id="KW-1133">Transmembrane helix</keyword>
<accession>C6DDL8</accession>
<organism>
    <name type="scientific">Pectobacterium carotovorum subsp. carotovorum (strain PC1)</name>
    <dbReference type="NCBI Taxonomy" id="561230"/>
    <lineage>
        <taxon>Bacteria</taxon>
        <taxon>Pseudomonadati</taxon>
        <taxon>Pseudomonadota</taxon>
        <taxon>Gammaproteobacteria</taxon>
        <taxon>Enterobacterales</taxon>
        <taxon>Pectobacteriaceae</taxon>
        <taxon>Pectobacterium</taxon>
    </lineage>
</organism>
<feature type="chain" id="PRO_1000213155" description="Undecaprenyl-diphosphatase">
    <location>
        <begin position="1"/>
        <end position="272"/>
    </location>
</feature>
<feature type="transmembrane region" description="Helical" evidence="1">
    <location>
        <begin position="6"/>
        <end position="26"/>
    </location>
</feature>
<feature type="transmembrane region" description="Helical" evidence="1">
    <location>
        <begin position="45"/>
        <end position="65"/>
    </location>
</feature>
<feature type="transmembrane region" description="Helical" evidence="1">
    <location>
        <begin position="92"/>
        <end position="112"/>
    </location>
</feature>
<feature type="transmembrane region" description="Helical" evidence="1">
    <location>
        <begin position="115"/>
        <end position="135"/>
    </location>
</feature>
<feature type="transmembrane region" description="Helical" evidence="1">
    <location>
        <begin position="189"/>
        <end position="209"/>
    </location>
</feature>
<feature type="transmembrane region" description="Helical" evidence="1">
    <location>
        <begin position="225"/>
        <end position="245"/>
    </location>
</feature>
<feature type="transmembrane region" description="Helical" evidence="1">
    <location>
        <begin position="251"/>
        <end position="271"/>
    </location>
</feature>
<protein>
    <recommendedName>
        <fullName evidence="1">Undecaprenyl-diphosphatase</fullName>
        <ecNumber evidence="1">3.6.1.27</ecNumber>
    </recommendedName>
    <alternativeName>
        <fullName evidence="1">Bacitracin resistance protein</fullName>
    </alternativeName>
    <alternativeName>
        <fullName evidence="1">Undecaprenyl pyrophosphate phosphatase</fullName>
    </alternativeName>
</protein>
<proteinExistence type="inferred from homology"/>